<proteinExistence type="inferred from homology"/>
<feature type="chain" id="PRO_0000282666" description="Prephenate dehydrogenase">
    <location>
        <begin position="1"/>
        <end position="363"/>
    </location>
</feature>
<feature type="domain" description="Prephenate/arogenate dehydrogenase" evidence="2">
    <location>
        <begin position="2"/>
        <end position="291"/>
    </location>
</feature>
<feature type="domain" description="ACT" evidence="3">
    <location>
        <begin position="296"/>
        <end position="363"/>
    </location>
</feature>
<feature type="binding site" evidence="1">
    <location>
        <begin position="3"/>
        <end position="33"/>
    </location>
    <ligand>
        <name>NAD(+)</name>
        <dbReference type="ChEBI" id="CHEBI:57540"/>
    </ligand>
</feature>
<evidence type="ECO:0000255" key="1"/>
<evidence type="ECO:0000255" key="2">
    <source>
        <dbReference type="PROSITE-ProRule" id="PRU00522"/>
    </source>
</evidence>
<evidence type="ECO:0000255" key="3">
    <source>
        <dbReference type="PROSITE-ProRule" id="PRU01007"/>
    </source>
</evidence>
<evidence type="ECO:0000305" key="4"/>
<gene>
    <name type="primary">tyrA</name>
    <name type="ordered locus">SSP1387</name>
</gene>
<keyword id="KW-0028">Amino-acid biosynthesis</keyword>
<keyword id="KW-0057">Aromatic amino acid biosynthesis</keyword>
<keyword id="KW-0520">NAD</keyword>
<keyword id="KW-0560">Oxidoreductase</keyword>
<keyword id="KW-1185">Reference proteome</keyword>
<keyword id="KW-0827">Tyrosine biosynthesis</keyword>
<dbReference type="EC" id="1.3.1.12"/>
<dbReference type="EMBL" id="AP008934">
    <property type="protein sequence ID" value="BAE18532.1"/>
    <property type="molecule type" value="Genomic_DNA"/>
</dbReference>
<dbReference type="RefSeq" id="WP_002483353.1">
    <property type="nucleotide sequence ID" value="NZ_MTGA01000038.1"/>
</dbReference>
<dbReference type="SMR" id="Q49XG5"/>
<dbReference type="KEGG" id="ssp:SSP1387"/>
<dbReference type="eggNOG" id="COG0287">
    <property type="taxonomic scope" value="Bacteria"/>
</dbReference>
<dbReference type="HOGENOM" id="CLU_055968_2_1_9"/>
<dbReference type="OrthoDB" id="9802008at2"/>
<dbReference type="UniPathway" id="UPA00122">
    <property type="reaction ID" value="UER00961"/>
</dbReference>
<dbReference type="Proteomes" id="UP000006371">
    <property type="component" value="Chromosome"/>
</dbReference>
<dbReference type="GO" id="GO:0070403">
    <property type="term" value="F:NAD+ binding"/>
    <property type="evidence" value="ECO:0007669"/>
    <property type="project" value="InterPro"/>
</dbReference>
<dbReference type="GO" id="GO:0008977">
    <property type="term" value="F:prephenate dehydrogenase (NAD+) activity"/>
    <property type="evidence" value="ECO:0007669"/>
    <property type="project" value="UniProtKB-EC"/>
</dbReference>
<dbReference type="GO" id="GO:0004665">
    <property type="term" value="F:prephenate dehydrogenase (NADP+) activity"/>
    <property type="evidence" value="ECO:0007669"/>
    <property type="project" value="InterPro"/>
</dbReference>
<dbReference type="GO" id="GO:0006571">
    <property type="term" value="P:tyrosine biosynthetic process"/>
    <property type="evidence" value="ECO:0007669"/>
    <property type="project" value="UniProtKB-UniPathway"/>
</dbReference>
<dbReference type="CDD" id="cd04909">
    <property type="entry name" value="ACT_PDH-BS"/>
    <property type="match status" value="1"/>
</dbReference>
<dbReference type="FunFam" id="1.10.3660.10:FF:000003">
    <property type="entry name" value="Prephenate dehydrogenase"/>
    <property type="match status" value="1"/>
</dbReference>
<dbReference type="FunFam" id="3.40.50.720:FF:000208">
    <property type="entry name" value="Prephenate dehydrogenase"/>
    <property type="match status" value="1"/>
</dbReference>
<dbReference type="Gene3D" id="3.30.70.260">
    <property type="match status" value="1"/>
</dbReference>
<dbReference type="Gene3D" id="1.10.3660.10">
    <property type="entry name" value="6-phosphogluconate dehydrogenase C-terminal like domain"/>
    <property type="match status" value="1"/>
</dbReference>
<dbReference type="Gene3D" id="3.40.50.720">
    <property type="entry name" value="NAD(P)-binding Rossmann-like Domain"/>
    <property type="match status" value="1"/>
</dbReference>
<dbReference type="InterPro" id="IPR008927">
    <property type="entry name" value="6-PGluconate_DH-like_C_sf"/>
</dbReference>
<dbReference type="InterPro" id="IPR045865">
    <property type="entry name" value="ACT-like_dom_sf"/>
</dbReference>
<dbReference type="InterPro" id="IPR002912">
    <property type="entry name" value="ACT_dom"/>
</dbReference>
<dbReference type="InterPro" id="IPR036291">
    <property type="entry name" value="NAD(P)-bd_dom_sf"/>
</dbReference>
<dbReference type="InterPro" id="IPR046825">
    <property type="entry name" value="PDH_C"/>
</dbReference>
<dbReference type="InterPro" id="IPR046826">
    <property type="entry name" value="PDH_N"/>
</dbReference>
<dbReference type="InterPro" id="IPR050812">
    <property type="entry name" value="Preph/Arog_dehydrog"/>
</dbReference>
<dbReference type="InterPro" id="IPR003099">
    <property type="entry name" value="Prephen_DH"/>
</dbReference>
<dbReference type="NCBIfam" id="NF005106">
    <property type="entry name" value="PRK06545.1-4"/>
    <property type="match status" value="1"/>
</dbReference>
<dbReference type="NCBIfam" id="NF005107">
    <property type="entry name" value="PRK06545.1-5"/>
    <property type="match status" value="1"/>
</dbReference>
<dbReference type="PANTHER" id="PTHR21363">
    <property type="entry name" value="PREPHENATE DEHYDROGENASE"/>
    <property type="match status" value="1"/>
</dbReference>
<dbReference type="PANTHER" id="PTHR21363:SF0">
    <property type="entry name" value="PREPHENATE DEHYDROGENASE [NADP(+)]"/>
    <property type="match status" value="1"/>
</dbReference>
<dbReference type="Pfam" id="PF01842">
    <property type="entry name" value="ACT"/>
    <property type="match status" value="1"/>
</dbReference>
<dbReference type="Pfam" id="PF20463">
    <property type="entry name" value="PDH_C"/>
    <property type="match status" value="1"/>
</dbReference>
<dbReference type="Pfam" id="PF02153">
    <property type="entry name" value="PDH_N"/>
    <property type="match status" value="1"/>
</dbReference>
<dbReference type="SUPFAM" id="SSF48179">
    <property type="entry name" value="6-phosphogluconate dehydrogenase C-terminal domain-like"/>
    <property type="match status" value="1"/>
</dbReference>
<dbReference type="SUPFAM" id="SSF55021">
    <property type="entry name" value="ACT-like"/>
    <property type="match status" value="1"/>
</dbReference>
<dbReference type="SUPFAM" id="SSF51735">
    <property type="entry name" value="NAD(P)-binding Rossmann-fold domains"/>
    <property type="match status" value="1"/>
</dbReference>
<dbReference type="PROSITE" id="PS51671">
    <property type="entry name" value="ACT"/>
    <property type="match status" value="1"/>
</dbReference>
<dbReference type="PROSITE" id="PS51176">
    <property type="entry name" value="PDH_ADH"/>
    <property type="match status" value="1"/>
</dbReference>
<protein>
    <recommendedName>
        <fullName>Prephenate dehydrogenase</fullName>
        <shortName>PDH</shortName>
        <ecNumber>1.3.1.12</ecNumber>
    </recommendedName>
</protein>
<organism>
    <name type="scientific">Staphylococcus saprophyticus subsp. saprophyticus (strain ATCC 15305 / DSM 20229 / NCIMB 8711 / NCTC 7292 / S-41)</name>
    <dbReference type="NCBI Taxonomy" id="342451"/>
    <lineage>
        <taxon>Bacteria</taxon>
        <taxon>Bacillati</taxon>
        <taxon>Bacillota</taxon>
        <taxon>Bacilli</taxon>
        <taxon>Bacillales</taxon>
        <taxon>Staphylococcaceae</taxon>
        <taxon>Staphylococcus</taxon>
    </lineage>
</organism>
<accession>Q49XG5</accession>
<name>TYRA_STAS1</name>
<sequence>MKQILFVGLGLIGGSLASNLRYYHDDIEITAFDADTSQLDKALSIGIIDYQSTDYKTSVENADIIIYATPVQQTVKYLQDLPNYQLKKHVIITDTGSTKSTIQQYEQFLLNHDIHLVGGHPMAGSHKSGVLNAKKHLFENAFYILVHNETDNDAAFEEIQHLLQTTSAKFISTTAEEHDFVTGIVSHVPHIIASSLVHLNAQHVEDSSLVKTLAAGGFRDITRIASSNPIMWRDITIENKNTILRILKEWKNQMSDVINIIEHNNPDELYDFFNDAKVYRDQLPLKQQGALSVEYDLYVDIPDKPGMISKVTNILSLHNISISNLRILEVREDIYGALRVSFKNPQDRKDGADALSDFDTYFD</sequence>
<reference key="1">
    <citation type="journal article" date="2005" name="Proc. Natl. Acad. Sci. U.S.A.">
        <title>Whole genome sequence of Staphylococcus saprophyticus reveals the pathogenesis of uncomplicated urinary tract infection.</title>
        <authorList>
            <person name="Kuroda M."/>
            <person name="Yamashita A."/>
            <person name="Hirakawa H."/>
            <person name="Kumano M."/>
            <person name="Morikawa K."/>
            <person name="Higashide M."/>
            <person name="Maruyama A."/>
            <person name="Inose Y."/>
            <person name="Matoba K."/>
            <person name="Toh H."/>
            <person name="Kuhara S."/>
            <person name="Hattori M."/>
            <person name="Ohta T."/>
        </authorList>
    </citation>
    <scope>NUCLEOTIDE SEQUENCE [LARGE SCALE GENOMIC DNA]</scope>
    <source>
        <strain>ATCC 15305 / DSM 20229 / NCIMB 8711 / NCTC 7292 / S-41</strain>
    </source>
</reference>
<comment type="catalytic activity">
    <reaction>
        <text>prephenate + NAD(+) = 3-(4-hydroxyphenyl)pyruvate + CO2 + NADH</text>
        <dbReference type="Rhea" id="RHEA:13869"/>
        <dbReference type="ChEBI" id="CHEBI:16526"/>
        <dbReference type="ChEBI" id="CHEBI:29934"/>
        <dbReference type="ChEBI" id="CHEBI:36242"/>
        <dbReference type="ChEBI" id="CHEBI:57540"/>
        <dbReference type="ChEBI" id="CHEBI:57945"/>
        <dbReference type="EC" id="1.3.1.12"/>
    </reaction>
</comment>
<comment type="pathway">
    <text>Amino-acid biosynthesis; L-tyrosine biosynthesis; (4-hydroxyphenyl)pyruvate from prephenate (NAD(+) route): step 1/1.</text>
</comment>
<comment type="similarity">
    <text evidence="4">Belongs to the prephenate/arogenate dehydrogenase family.</text>
</comment>